<protein>
    <recommendedName>
        <fullName>S-adenosylmethionine synthase 3</fullName>
        <shortName>AdoMet synthase 3</shortName>
        <ecNumber evidence="5">2.5.1.6</ecNumber>
    </recommendedName>
    <alternativeName>
        <fullName>Methionine adenosyltransferase 3</fullName>
        <shortName>MAT 3</shortName>
    </alternativeName>
</protein>
<organism>
    <name type="scientific">Catharanthus roseus</name>
    <name type="common">Madagascar periwinkle</name>
    <name type="synonym">Vinca rosea</name>
    <dbReference type="NCBI Taxonomy" id="4058"/>
    <lineage>
        <taxon>Eukaryota</taxon>
        <taxon>Viridiplantae</taxon>
        <taxon>Streptophyta</taxon>
        <taxon>Embryophyta</taxon>
        <taxon>Tracheophyta</taxon>
        <taxon>Spermatophyta</taxon>
        <taxon>Magnoliopsida</taxon>
        <taxon>eudicotyledons</taxon>
        <taxon>Gunneridae</taxon>
        <taxon>Pentapetalae</taxon>
        <taxon>asterids</taxon>
        <taxon>lamiids</taxon>
        <taxon>Gentianales</taxon>
        <taxon>Apocynaceae</taxon>
        <taxon>Rauvolfioideae</taxon>
        <taxon>Vinceae</taxon>
        <taxon>Catharanthinae</taxon>
        <taxon>Catharanthus</taxon>
    </lineage>
</organism>
<accession>Q96553</accession>
<feature type="chain" id="PRO_0000174461" description="S-adenosylmethionine synthase 3">
    <location>
        <begin position="1"/>
        <end position="390"/>
    </location>
</feature>
<feature type="binding site" evidence="3">
    <location>
        <position position="9"/>
    </location>
    <ligand>
        <name>Mg(2+)</name>
        <dbReference type="ChEBI" id="CHEBI:18420"/>
    </ligand>
</feature>
<feature type="binding site" description="in other chain" evidence="4">
    <location>
        <position position="15"/>
    </location>
    <ligand>
        <name>ATP</name>
        <dbReference type="ChEBI" id="CHEBI:30616"/>
        <note>ligand shared between two neighboring subunits</note>
    </ligand>
</feature>
<feature type="binding site" evidence="2">
    <location>
        <position position="43"/>
    </location>
    <ligand>
        <name>K(+)</name>
        <dbReference type="ChEBI" id="CHEBI:29103"/>
    </ligand>
</feature>
<feature type="binding site" description="in other chain" evidence="2">
    <location>
        <position position="56"/>
    </location>
    <ligand>
        <name>L-methionine</name>
        <dbReference type="ChEBI" id="CHEBI:57844"/>
        <note>ligand shared between two neighboring subunits</note>
    </ligand>
</feature>
<feature type="binding site" description="in other chain" evidence="2">
    <location>
        <position position="99"/>
    </location>
    <ligand>
        <name>L-methionine</name>
        <dbReference type="ChEBI" id="CHEBI:57844"/>
        <note>ligand shared between two neighboring subunits</note>
    </ligand>
</feature>
<feature type="binding site" description="in other chain" evidence="4">
    <location>
        <begin position="167"/>
        <end position="169"/>
    </location>
    <ligand>
        <name>ATP</name>
        <dbReference type="ChEBI" id="CHEBI:30616"/>
        <note>ligand shared between two neighboring subunits</note>
    </ligand>
</feature>
<feature type="binding site" description="in other chain" evidence="4">
    <location>
        <begin position="235"/>
        <end position="238"/>
    </location>
    <ligand>
        <name>ATP</name>
        <dbReference type="ChEBI" id="CHEBI:30616"/>
        <note>ligand shared between two neighboring subunits</note>
    </ligand>
</feature>
<feature type="binding site" description="in other chain" evidence="4">
    <location>
        <position position="246"/>
    </location>
    <ligand>
        <name>ATP</name>
        <dbReference type="ChEBI" id="CHEBI:30616"/>
        <note>ligand shared between two neighboring subunits</note>
    </ligand>
</feature>
<feature type="binding site" evidence="2">
    <location>
        <position position="246"/>
    </location>
    <ligand>
        <name>L-methionine</name>
        <dbReference type="ChEBI" id="CHEBI:57844"/>
        <note>ligand shared between two neighboring subunits</note>
    </ligand>
</feature>
<feature type="binding site" description="in other chain" evidence="2">
    <location>
        <begin position="252"/>
        <end position="253"/>
    </location>
    <ligand>
        <name>ATP</name>
        <dbReference type="ChEBI" id="CHEBI:30616"/>
        <note>ligand shared between two neighboring subunits</note>
    </ligand>
</feature>
<feature type="binding site" evidence="2">
    <location>
        <position position="269"/>
    </location>
    <ligand>
        <name>ATP</name>
        <dbReference type="ChEBI" id="CHEBI:30616"/>
        <note>ligand shared between two neighboring subunits</note>
    </ligand>
</feature>
<feature type="binding site" evidence="2">
    <location>
        <position position="273"/>
    </location>
    <ligand>
        <name>ATP</name>
        <dbReference type="ChEBI" id="CHEBI:30616"/>
        <note>ligand shared between two neighboring subunits</note>
    </ligand>
</feature>
<feature type="binding site" evidence="3">
    <location>
        <position position="277"/>
    </location>
    <ligand>
        <name>ATP</name>
        <dbReference type="ChEBI" id="CHEBI:30616"/>
        <note>ligand shared between two neighboring subunits</note>
    </ligand>
</feature>
<feature type="binding site" description="in other chain" evidence="2">
    <location>
        <position position="277"/>
    </location>
    <ligand>
        <name>L-methionine</name>
        <dbReference type="ChEBI" id="CHEBI:57844"/>
        <note>ligand shared between two neighboring subunits</note>
    </ligand>
</feature>
<comment type="function">
    <text evidence="5">Catalyzes the formation of S-adenosylmethionine from methionine and ATP. The reaction comprises two steps that are both catalyzed by the same enzyme: formation of S-adenosylmethionine (AdoMet) and triphosphate, and subsequent hydrolysis of the triphosphate.</text>
</comment>
<comment type="catalytic activity">
    <reaction evidence="5">
        <text>L-methionine + ATP + H2O = S-adenosyl-L-methionine + phosphate + diphosphate</text>
        <dbReference type="Rhea" id="RHEA:21080"/>
        <dbReference type="ChEBI" id="CHEBI:15377"/>
        <dbReference type="ChEBI" id="CHEBI:30616"/>
        <dbReference type="ChEBI" id="CHEBI:33019"/>
        <dbReference type="ChEBI" id="CHEBI:43474"/>
        <dbReference type="ChEBI" id="CHEBI:57844"/>
        <dbReference type="ChEBI" id="CHEBI:59789"/>
        <dbReference type="EC" id="2.5.1.6"/>
    </reaction>
</comment>
<comment type="cofactor">
    <cofactor evidence="5">
        <name>Mn(2+)</name>
        <dbReference type="ChEBI" id="CHEBI:29035"/>
    </cofactor>
    <cofactor evidence="5">
        <name>Mg(2+)</name>
        <dbReference type="ChEBI" id="CHEBI:18420"/>
    </cofactor>
    <cofactor evidence="5">
        <name>Co(2+)</name>
        <dbReference type="ChEBI" id="CHEBI:48828"/>
    </cofactor>
    <text evidence="3 5">Binds 2 divalent ions per subunit. The metal ions interact primarily with the substrate (By similarity). Can utilize magnesium, manganese or cobalt (in vitro) (PubMed:9037140).</text>
</comment>
<comment type="cofactor">
    <cofactor evidence="5">
        <name>K(+)</name>
        <dbReference type="ChEBI" id="CHEBI:29103"/>
    </cofactor>
    <cofactor evidence="5">
        <name>NH4(+)</name>
        <dbReference type="ChEBI" id="CHEBI:28938"/>
    </cofactor>
    <text evidence="3 5">Binds 1 potassium ion per subunit. The potassium ion interacts primarily with the substrate (By similarity). Potassium can be replaced by NH(4) (in vitro) (PubMed:9037140).</text>
</comment>
<comment type="activity regulation">
    <text evidence="5">Inhibited by products of SAMS reaction (SAM, Pi, PPi), substrate analogs (cycloleucine and ethionine), and alternative nucleotides (GTP, CTP and ADP). Strongly repressed by PPPi.</text>
</comment>
<comment type="biophysicochemical properties">
    <kinetics>
        <KM evidence="5">102 uM for L-methionine</KM>
        <KM evidence="5">313 uM for ATP</KM>
    </kinetics>
    <phDependence>
        <text evidence="5">Optimum pH is 7-8.3.</text>
    </phDependence>
    <temperatureDependence>
        <text evidence="5">Optimum temperature is 37-45 degrees Celsius.</text>
    </temperatureDependence>
</comment>
<comment type="pathway">
    <text evidence="5">Amino-acid biosynthesis; S-adenosyl-L-methionine biosynthesis; S-adenosyl-L-methionine from L-methionine: step 1/1.</text>
</comment>
<comment type="subunit">
    <text evidence="1">Homotetramer.</text>
</comment>
<comment type="subcellular location">
    <subcellularLocation>
        <location evidence="1">Cytoplasm</location>
    </subcellularLocation>
</comment>
<comment type="tissue specificity">
    <text evidence="5">Mostly expressed in roots, and, to a lower extent, in hypocotyls and cotyledons.</text>
</comment>
<comment type="induction">
    <text evidence="5">Transiently induced by elicitors from Phytophthora megasperma, salt stress, and sucrose.</text>
</comment>
<comment type="similarity">
    <text evidence="6">Belongs to the AdoMet synthase family.</text>
</comment>
<gene>
    <name type="primary">SAMS3</name>
</gene>
<proteinExistence type="evidence at protein level"/>
<keyword id="KW-0067">ATP-binding</keyword>
<keyword id="KW-0170">Cobalt</keyword>
<keyword id="KW-0963">Cytoplasm</keyword>
<keyword id="KW-0460">Magnesium</keyword>
<keyword id="KW-0464">Manganese</keyword>
<keyword id="KW-0479">Metal-binding</keyword>
<keyword id="KW-0547">Nucleotide-binding</keyword>
<keyword id="KW-0554">One-carbon metabolism</keyword>
<keyword id="KW-0630">Potassium</keyword>
<keyword id="KW-0808">Transferase</keyword>
<name>METK3_CATRO</name>
<reference key="1">
    <citation type="journal article" date="1997" name="Plant Mol. Biol.">
        <title>Three differentially expressed S-adenosylmethionine synthetases from Catharanthus roseus: molecular and functional characterization.</title>
        <authorList>
            <person name="Schroeder G."/>
            <person name="Eichel J."/>
            <person name="Breinig S."/>
            <person name="Schroeder J."/>
        </authorList>
    </citation>
    <scope>NUCLEOTIDE SEQUENCE [MRNA]</scope>
    <scope>FUNCTION</scope>
    <scope>CATALYTIC ACTIVITY</scope>
    <scope>COFACTOR</scope>
    <scope>BIOPHYSICOCHEMICAL PROPERTIES</scope>
    <scope>ACTIVITY REGULATION</scope>
    <scope>TISSUE SPECIFICITY</scope>
    <scope>PATHWAY</scope>
    <scope>INDUCTION</scope>
</reference>
<sequence>METFLFTSESVNEGHPDKLCDQVSDAILDACLEQDPESKVACETCTKTNMVMVFGEITTKATVNYEKIVRDTCRGIGFTSPDVGLDADNCKVLVNIEQQSPDIAQGVHGHLTKKPEEIGAGDQGHMFGYATDETPELMPLTHVLATKLGAKLTEVRKNKTCPWLRPDGKTQVTVEYRNEGGAMVPIRVHTVLISTQHDETVTNEQIAQDLKEHVIKPVIPAQYLDDQTIFHLNPSGRFVIGGPHGDAGLTGRKIIIDTYGGWGAHGGGAFSGKDPTKVDRSGAYIVRQAAKSVVASGLARRCLVQVSYAIGVAEPLSVFVDTFKTGKIPDKDILALIKENFDFRPGMIAINLDLKRGGNFRYQKTAALGHLGRDDPDFTWETVKILKPKA</sequence>
<evidence type="ECO:0000250" key="1"/>
<evidence type="ECO:0000250" key="2">
    <source>
        <dbReference type="UniProtKB" id="P0A817"/>
    </source>
</evidence>
<evidence type="ECO:0000250" key="3">
    <source>
        <dbReference type="UniProtKB" id="P13444"/>
    </source>
</evidence>
<evidence type="ECO:0000250" key="4">
    <source>
        <dbReference type="UniProtKB" id="Q00266"/>
    </source>
</evidence>
<evidence type="ECO:0000269" key="5">
    <source>
    </source>
</evidence>
<evidence type="ECO:0000305" key="6"/>
<dbReference type="EC" id="2.5.1.6" evidence="5"/>
<dbReference type="EMBL" id="Z71273">
    <property type="protein sequence ID" value="CAA95858.1"/>
    <property type="molecule type" value="mRNA"/>
</dbReference>
<dbReference type="SMR" id="Q96553"/>
<dbReference type="BRENDA" id="2.5.1.6">
    <property type="organism ID" value="1211"/>
</dbReference>
<dbReference type="UniPathway" id="UPA00315">
    <property type="reaction ID" value="UER00080"/>
</dbReference>
<dbReference type="GO" id="GO:0005737">
    <property type="term" value="C:cytoplasm"/>
    <property type="evidence" value="ECO:0007669"/>
    <property type="project" value="UniProtKB-SubCell"/>
</dbReference>
<dbReference type="GO" id="GO:0005524">
    <property type="term" value="F:ATP binding"/>
    <property type="evidence" value="ECO:0007669"/>
    <property type="project" value="UniProtKB-KW"/>
</dbReference>
<dbReference type="GO" id="GO:0046872">
    <property type="term" value="F:metal ion binding"/>
    <property type="evidence" value="ECO:0007669"/>
    <property type="project" value="UniProtKB-KW"/>
</dbReference>
<dbReference type="GO" id="GO:0004478">
    <property type="term" value="F:methionine adenosyltransferase activity"/>
    <property type="evidence" value="ECO:0007669"/>
    <property type="project" value="UniProtKB-EC"/>
</dbReference>
<dbReference type="GO" id="GO:0006730">
    <property type="term" value="P:one-carbon metabolic process"/>
    <property type="evidence" value="ECO:0007669"/>
    <property type="project" value="UniProtKB-KW"/>
</dbReference>
<dbReference type="GO" id="GO:0006556">
    <property type="term" value="P:S-adenosylmethionine biosynthetic process"/>
    <property type="evidence" value="ECO:0007669"/>
    <property type="project" value="UniProtKB-UniPathway"/>
</dbReference>
<dbReference type="CDD" id="cd18079">
    <property type="entry name" value="S-AdoMet_synt"/>
    <property type="match status" value="1"/>
</dbReference>
<dbReference type="FunFam" id="3.30.300.10:FF:000001">
    <property type="entry name" value="S-adenosylmethionine synthase"/>
    <property type="match status" value="1"/>
</dbReference>
<dbReference type="FunFam" id="3.30.300.10:FF:000003">
    <property type="entry name" value="S-adenosylmethionine synthase"/>
    <property type="match status" value="1"/>
</dbReference>
<dbReference type="FunFam" id="3.30.300.10:FF:000004">
    <property type="entry name" value="S-adenosylmethionine synthase"/>
    <property type="match status" value="1"/>
</dbReference>
<dbReference type="Gene3D" id="3.30.300.10">
    <property type="match status" value="3"/>
</dbReference>
<dbReference type="HAMAP" id="MF_00086">
    <property type="entry name" value="S_AdoMet_synth1"/>
    <property type="match status" value="1"/>
</dbReference>
<dbReference type="InterPro" id="IPR022631">
    <property type="entry name" value="ADOMET_SYNTHASE_CS"/>
</dbReference>
<dbReference type="InterPro" id="IPR022630">
    <property type="entry name" value="S-AdoMet_synt_C"/>
</dbReference>
<dbReference type="InterPro" id="IPR022629">
    <property type="entry name" value="S-AdoMet_synt_central"/>
</dbReference>
<dbReference type="InterPro" id="IPR022628">
    <property type="entry name" value="S-AdoMet_synt_N"/>
</dbReference>
<dbReference type="InterPro" id="IPR002133">
    <property type="entry name" value="S-AdoMet_synthetase"/>
</dbReference>
<dbReference type="InterPro" id="IPR022636">
    <property type="entry name" value="S-AdoMet_synthetase_sfam"/>
</dbReference>
<dbReference type="NCBIfam" id="TIGR01034">
    <property type="entry name" value="metK"/>
    <property type="match status" value="1"/>
</dbReference>
<dbReference type="PANTHER" id="PTHR11964">
    <property type="entry name" value="S-ADENOSYLMETHIONINE SYNTHETASE"/>
    <property type="match status" value="1"/>
</dbReference>
<dbReference type="Pfam" id="PF02773">
    <property type="entry name" value="S-AdoMet_synt_C"/>
    <property type="match status" value="1"/>
</dbReference>
<dbReference type="Pfam" id="PF02772">
    <property type="entry name" value="S-AdoMet_synt_M"/>
    <property type="match status" value="1"/>
</dbReference>
<dbReference type="Pfam" id="PF00438">
    <property type="entry name" value="S-AdoMet_synt_N"/>
    <property type="match status" value="1"/>
</dbReference>
<dbReference type="PIRSF" id="PIRSF000497">
    <property type="entry name" value="MAT"/>
    <property type="match status" value="1"/>
</dbReference>
<dbReference type="SUPFAM" id="SSF55973">
    <property type="entry name" value="S-adenosylmethionine synthetase"/>
    <property type="match status" value="3"/>
</dbReference>
<dbReference type="PROSITE" id="PS00376">
    <property type="entry name" value="ADOMET_SYNTHASE_1"/>
    <property type="match status" value="1"/>
</dbReference>
<dbReference type="PROSITE" id="PS00377">
    <property type="entry name" value="ADOMET_SYNTHASE_2"/>
    <property type="match status" value="1"/>
</dbReference>